<dbReference type="EC" id="1.-.-.-" evidence="6"/>
<dbReference type="EMBL" id="KC145148">
    <property type="protein sequence ID" value="AGO59043.1"/>
    <property type="molecule type" value="Genomic_DNA"/>
</dbReference>
<dbReference type="EMBL" id="KI912116">
    <property type="protein sequence ID" value="ETS76952.1"/>
    <property type="status" value="ALT_SEQ"/>
    <property type="molecule type" value="Genomic_DNA"/>
</dbReference>
<dbReference type="RefSeq" id="XP_007837598.1">
    <property type="nucleotide sequence ID" value="XM_007839407.1"/>
</dbReference>
<dbReference type="SMR" id="A0A067XMT5"/>
<dbReference type="STRING" id="1229662.A0A067XMT5"/>
<dbReference type="GeneID" id="19275839"/>
<dbReference type="KEGG" id="pfy:PFICI_10826"/>
<dbReference type="eggNOG" id="ENOG502SBMN">
    <property type="taxonomic scope" value="Eukaryota"/>
</dbReference>
<dbReference type="InParanoid" id="A0A067XMT5"/>
<dbReference type="OrthoDB" id="5954308at2759"/>
<dbReference type="Proteomes" id="UP000030651">
    <property type="component" value="Unassembled WGS sequence"/>
</dbReference>
<dbReference type="GO" id="GO:0016020">
    <property type="term" value="C:membrane"/>
    <property type="evidence" value="ECO:0007669"/>
    <property type="project" value="UniProtKB-SubCell"/>
</dbReference>
<dbReference type="GO" id="GO:0004497">
    <property type="term" value="F:monooxygenase activity"/>
    <property type="evidence" value="ECO:0007669"/>
    <property type="project" value="UniProtKB-KW"/>
</dbReference>
<dbReference type="InterPro" id="IPR013901">
    <property type="entry name" value="Anthrone_oxy"/>
</dbReference>
<dbReference type="PANTHER" id="PTHR35042">
    <property type="entry name" value="ANTHRONE OXYGENASE ENCC"/>
    <property type="match status" value="1"/>
</dbReference>
<dbReference type="PANTHER" id="PTHR35042:SF3">
    <property type="entry name" value="ANTHRONE OXYGENASE-RELATED"/>
    <property type="match status" value="1"/>
</dbReference>
<dbReference type="Pfam" id="PF08592">
    <property type="entry name" value="Anthrone_oxy"/>
    <property type="match status" value="1"/>
</dbReference>
<gene>
    <name evidence="4" type="primary">ptaC</name>
    <name type="ORF">PFICI_10826</name>
</gene>
<proteinExistence type="evidence at transcript level"/>
<evidence type="ECO:0000255" key="1"/>
<evidence type="ECO:0000269" key="2">
    <source>
    </source>
</evidence>
<evidence type="ECO:0000269" key="3">
    <source>
    </source>
</evidence>
<evidence type="ECO:0000303" key="4">
    <source>
    </source>
</evidence>
<evidence type="ECO:0000305" key="5"/>
<evidence type="ECO:0000305" key="6">
    <source>
    </source>
</evidence>
<feature type="signal peptide" evidence="1">
    <location>
        <begin position="1"/>
        <end position="19"/>
    </location>
</feature>
<feature type="chain" id="PRO_0000443040" description="Anthrone oxygenase ptaC">
    <location>
        <begin position="20"/>
        <end position="141"/>
    </location>
</feature>
<feature type="transmembrane region" description="Helical" evidence="1">
    <location>
        <begin position="33"/>
        <end position="53"/>
    </location>
</feature>
<feature type="transmembrane region" description="Helical" evidence="1">
    <location>
        <begin position="64"/>
        <end position="84"/>
    </location>
</feature>
<reference key="1">
    <citation type="journal article" date="2014" name="ChemBioChem">
        <title>Identification of the first diphenyl ether gene cluster for pestheic acid biosynthesis in plant endophyte Pestalotiopsis fici.</title>
        <authorList>
            <person name="Xu X."/>
            <person name="Liu L."/>
            <person name="Zhang F."/>
            <person name="Wang W."/>
            <person name="Li J."/>
            <person name="Guo L."/>
            <person name="Che Y."/>
            <person name="Liu G."/>
        </authorList>
    </citation>
    <scope>NUCLEOTIDE SEQUENCE [GENOMIC DNA]</scope>
    <scope>FUNCTION</scope>
    <scope>INDUCTION</scope>
    <source>
        <strain>W106-1 / CGMCC3.15140</strain>
    </source>
</reference>
<reference key="2">
    <citation type="journal article" date="2015" name="BMC Genomics">
        <title>Genomic and transcriptomic analysis of the endophytic fungus Pestalotiopsis fici reveals its lifestyle and high potential for synthesis of natural products.</title>
        <authorList>
            <person name="Wang X."/>
            <person name="Zhang X."/>
            <person name="Liu L."/>
            <person name="Xiang M."/>
            <person name="Wang W."/>
            <person name="Sun X."/>
            <person name="Che Y."/>
            <person name="Guo L."/>
            <person name="Liu G."/>
            <person name="Guo L."/>
            <person name="Wang C."/>
            <person name="Yin W.B."/>
            <person name="Stadler M."/>
            <person name="Zhang X."/>
            <person name="Liu X."/>
        </authorList>
    </citation>
    <scope>NUCLEOTIDE SEQUENCE [LARGE SCALE GENOMIC DNA]</scope>
    <scope>INDUCTION</scope>
    <source>
        <strain>W106-1 / CGMCC3.15140</strain>
    </source>
</reference>
<keyword id="KW-0472">Membrane</keyword>
<keyword id="KW-0503">Monooxygenase</keyword>
<keyword id="KW-0560">Oxidoreductase</keyword>
<keyword id="KW-1185">Reference proteome</keyword>
<keyword id="KW-0732">Signal</keyword>
<keyword id="KW-0812">Transmembrane</keyword>
<keyword id="KW-1133">Transmembrane helix</keyword>
<sequence>MMGLPLMAVPMLLDTGADPVYLARQWARMYYYGVRTMPPLAITTFILYVWTIIRRRSQHQAWYILAVAAVVTMGMIPFTWYVLAPTNNALFRLAEGPEAASGTTAGSLEEVTELLVRWNKLHIARSLFPLTGVVIALSDAM</sequence>
<comment type="function">
    <text evidence="2">Anthrone oxygenase; part of the gene cluster that mediates the biosynthesis of pestheic acid, a diphenyl ether which is a biosynthetic precursor of the unique chloropupukeananes (PubMed:24302702). The biosynthesis initiates from condensation of acetate and malonate units catalyzed by the non-reducing PKS ptaA (PubMed:24302702). As the ptaA protein is TE/CLC domain-deficient, hydrolysis and Claisen cyclization of the polyketide could be catalyzed by ptaB containing a beta-lactamase domain (PubMed:24302702). The ptaB protein might hydrolyze the thioester bond between the ACP of ptaA and the intermediate to release atrochrysone carboxylic acid, which is spontaneously dehydrated to form endocrocin anthrone (PubMed:24302702). Endocrocin anthrone is then converted to endocrocin, catalyzed by the anthrone oxygenase ptaC (PubMed:24302702). Spontaneous decarboxylation of endocrocin occurs to generate emodin (PubMed:24302702). An O-methyltransferase (ptaH or ptaI) could methylate emodin to form physcion (PubMed:24302702). PtaJ could then catalyze the oxidative cleavage of physcion, and rotation of the intermediate could then afford desmethylisosulochrin (PubMed:24302702). PtaF, a putative NADH-dependent oxidoreductase, might also participate in the oxidative cleavage step (PubMed:24302702). Desmethylisosulochrin is then transformed by another O-methyltransferase (ptaH or ptaI) to form isosulochrin (PubMed:24302702). Chlorination of isosulochrin by ptaM in the cyclohexadienone B ring then produces chloroisosulochrin (PubMed:24302702). PtaE is responsible for the oxidative coupling reactions of both benzophenones isosulochrin and chloroisosulochrin to RES-1214-1 and pestheic acid respectively, regardless of chlorination.</text>
</comment>
<comment type="pathway">
    <text evidence="6">Secondary metabolite biosynthesis.</text>
</comment>
<comment type="subcellular location">
    <subcellularLocation>
        <location evidence="1">Membrane</location>
        <topology evidence="1">Multi-pass membrane protein</topology>
    </subcellularLocation>
</comment>
<comment type="induction">
    <text evidence="3 6">The cluster is expressed in rice fermentation medium (PubMed:25623211). Three regulators are located in the cluster (ptaR1, ptaR2 and ptaR3), suggesting that the production of pestheic acid is controlled by a complex regulatory mechanism (PubMed:24302702).</text>
</comment>
<comment type="similarity">
    <text evidence="5">Belongs to the anthrone oxygenase family.</text>
</comment>
<comment type="sequence caution" evidence="5">
    <conflict type="erroneous gene model prediction">
        <sequence resource="EMBL-CDS" id="ETS76952"/>
    </conflict>
</comment>
<name>PTAC_PESFW</name>
<accession>A0A067XMT5</accession>
<accession>W3WUY5</accession>
<organism>
    <name type="scientific">Pestalotiopsis fici (strain W106-1 / CGMCC3.15140)</name>
    <dbReference type="NCBI Taxonomy" id="1229662"/>
    <lineage>
        <taxon>Eukaryota</taxon>
        <taxon>Fungi</taxon>
        <taxon>Dikarya</taxon>
        <taxon>Ascomycota</taxon>
        <taxon>Pezizomycotina</taxon>
        <taxon>Sordariomycetes</taxon>
        <taxon>Xylariomycetidae</taxon>
        <taxon>Amphisphaeriales</taxon>
        <taxon>Sporocadaceae</taxon>
        <taxon>Pestalotiopsis</taxon>
    </lineage>
</organism>
<protein>
    <recommendedName>
        <fullName evidence="4">Anthrone oxygenase ptaC</fullName>
        <ecNumber evidence="6">1.-.-.-</ecNumber>
    </recommendedName>
    <alternativeName>
        <fullName evidence="4">Pestheic acid biosynthesis cluster protein C</fullName>
    </alternativeName>
</protein>